<name>MIAA_ACIBC</name>
<reference key="1">
    <citation type="journal article" date="2008" name="Antimicrob. Agents Chemother.">
        <title>Whole-genome pyrosequencing of an epidemic multidrug-resistant Acinetobacter baumannii strain belonging to the European clone II group.</title>
        <authorList>
            <person name="Iacono M."/>
            <person name="Villa L."/>
            <person name="Fortini D."/>
            <person name="Bordoni R."/>
            <person name="Imperi F."/>
            <person name="Bonnal R.J."/>
            <person name="Sicheritz-Ponten T."/>
            <person name="De Bellis G."/>
            <person name="Visca P."/>
            <person name="Cassone A."/>
            <person name="Carattoli A."/>
        </authorList>
    </citation>
    <scope>NUCLEOTIDE SEQUENCE [LARGE SCALE GENOMIC DNA]</scope>
    <source>
        <strain>ACICU</strain>
    </source>
</reference>
<proteinExistence type="inferred from homology"/>
<sequence>MSNQLPVINLMGPTASGKTALACELYERGNFELISVDSALVYKDMDIGTAKPTREEQELYPHHLIDIITPLEVYSAAQFVEDACALIDEMHSRGKTPILVGGTMLYFKALLEGLSSNLPSADANVRAAIEEKAANEGWQAVYDELVAVDPAAGVKFKVSDKQRIIRALEVYRITGQPITKLQAEQPKNVPYRYTFHNYALLPDRLELHQRIEQRLSKMWDIGFLSEVESLIEKYDLDENLPSMRSVGYRQALEFLLKSDMSLKKKQEMEDKALFATRQLAKRQYTWLRSLQEIHDFKTYLTIKQAKEDLRNSYG</sequence>
<keyword id="KW-0067">ATP-binding</keyword>
<keyword id="KW-0460">Magnesium</keyword>
<keyword id="KW-0547">Nucleotide-binding</keyword>
<keyword id="KW-0808">Transferase</keyword>
<keyword id="KW-0819">tRNA processing</keyword>
<evidence type="ECO:0000255" key="1">
    <source>
        <dbReference type="HAMAP-Rule" id="MF_00185"/>
    </source>
</evidence>
<gene>
    <name evidence="1" type="primary">miaA</name>
    <name type="ordered locus">ACICU_02311</name>
</gene>
<comment type="function">
    <text evidence="1">Catalyzes the transfer of a dimethylallyl group onto the adenine at position 37 in tRNAs that read codons beginning with uridine, leading to the formation of N6-(dimethylallyl)adenosine (i(6)A).</text>
</comment>
<comment type="catalytic activity">
    <reaction evidence="1">
        <text>adenosine(37) in tRNA + dimethylallyl diphosphate = N(6)-dimethylallyladenosine(37) in tRNA + diphosphate</text>
        <dbReference type="Rhea" id="RHEA:26482"/>
        <dbReference type="Rhea" id="RHEA-COMP:10162"/>
        <dbReference type="Rhea" id="RHEA-COMP:10375"/>
        <dbReference type="ChEBI" id="CHEBI:33019"/>
        <dbReference type="ChEBI" id="CHEBI:57623"/>
        <dbReference type="ChEBI" id="CHEBI:74411"/>
        <dbReference type="ChEBI" id="CHEBI:74415"/>
        <dbReference type="EC" id="2.5.1.75"/>
    </reaction>
</comment>
<comment type="cofactor">
    <cofactor evidence="1">
        <name>Mg(2+)</name>
        <dbReference type="ChEBI" id="CHEBI:18420"/>
    </cofactor>
</comment>
<comment type="subunit">
    <text evidence="1">Monomer.</text>
</comment>
<comment type="similarity">
    <text evidence="1">Belongs to the IPP transferase family.</text>
</comment>
<accession>B2HTT5</accession>
<feature type="chain" id="PRO_1000098634" description="tRNA dimethylallyltransferase">
    <location>
        <begin position="1"/>
        <end position="314"/>
    </location>
</feature>
<feature type="region of interest" description="Interaction with substrate tRNA" evidence="1">
    <location>
        <begin position="37"/>
        <end position="40"/>
    </location>
</feature>
<feature type="region of interest" description="Interaction with substrate tRNA" evidence="1">
    <location>
        <begin position="162"/>
        <end position="166"/>
    </location>
</feature>
<feature type="binding site" evidence="1">
    <location>
        <begin position="12"/>
        <end position="19"/>
    </location>
    <ligand>
        <name>ATP</name>
        <dbReference type="ChEBI" id="CHEBI:30616"/>
    </ligand>
</feature>
<feature type="binding site" evidence="1">
    <location>
        <begin position="14"/>
        <end position="19"/>
    </location>
    <ligand>
        <name>substrate</name>
    </ligand>
</feature>
<feature type="site" description="Interaction with substrate tRNA" evidence="1">
    <location>
        <position position="103"/>
    </location>
</feature>
<feature type="site" description="Interaction with substrate tRNA" evidence="1">
    <location>
        <position position="126"/>
    </location>
</feature>
<protein>
    <recommendedName>
        <fullName evidence="1">tRNA dimethylallyltransferase</fullName>
        <ecNumber evidence="1">2.5.1.75</ecNumber>
    </recommendedName>
    <alternativeName>
        <fullName evidence="1">Dimethylallyl diphosphate:tRNA dimethylallyltransferase</fullName>
        <shortName evidence="1">DMAPP:tRNA dimethylallyltransferase</shortName>
        <shortName evidence="1">DMATase</shortName>
    </alternativeName>
    <alternativeName>
        <fullName evidence="1">Isopentenyl-diphosphate:tRNA isopentenyltransferase</fullName>
        <shortName evidence="1">IPP transferase</shortName>
        <shortName evidence="1">IPPT</shortName>
        <shortName evidence="1">IPTase</shortName>
    </alternativeName>
</protein>
<dbReference type="EC" id="2.5.1.75" evidence="1"/>
<dbReference type="EMBL" id="CP000863">
    <property type="protein sequence ID" value="ACC57623.1"/>
    <property type="molecule type" value="Genomic_DNA"/>
</dbReference>
<dbReference type="RefSeq" id="WP_000070779.1">
    <property type="nucleotide sequence ID" value="NZ_CP031380.1"/>
</dbReference>
<dbReference type="SMR" id="B2HTT5"/>
<dbReference type="GeneID" id="92894356"/>
<dbReference type="KEGG" id="abc:ACICU_02311"/>
<dbReference type="HOGENOM" id="CLU_032616_0_0_6"/>
<dbReference type="Proteomes" id="UP000008839">
    <property type="component" value="Chromosome"/>
</dbReference>
<dbReference type="GO" id="GO:0005524">
    <property type="term" value="F:ATP binding"/>
    <property type="evidence" value="ECO:0007669"/>
    <property type="project" value="UniProtKB-UniRule"/>
</dbReference>
<dbReference type="GO" id="GO:0052381">
    <property type="term" value="F:tRNA dimethylallyltransferase activity"/>
    <property type="evidence" value="ECO:0007669"/>
    <property type="project" value="UniProtKB-UniRule"/>
</dbReference>
<dbReference type="GO" id="GO:0006400">
    <property type="term" value="P:tRNA modification"/>
    <property type="evidence" value="ECO:0007669"/>
    <property type="project" value="TreeGrafter"/>
</dbReference>
<dbReference type="FunFam" id="1.10.20.140:FF:000001">
    <property type="entry name" value="tRNA dimethylallyltransferase"/>
    <property type="match status" value="1"/>
</dbReference>
<dbReference type="Gene3D" id="1.10.20.140">
    <property type="match status" value="1"/>
</dbReference>
<dbReference type="Gene3D" id="3.40.50.300">
    <property type="entry name" value="P-loop containing nucleotide triphosphate hydrolases"/>
    <property type="match status" value="1"/>
</dbReference>
<dbReference type="HAMAP" id="MF_00185">
    <property type="entry name" value="IPP_trans"/>
    <property type="match status" value="1"/>
</dbReference>
<dbReference type="InterPro" id="IPR039657">
    <property type="entry name" value="Dimethylallyltransferase"/>
</dbReference>
<dbReference type="InterPro" id="IPR018022">
    <property type="entry name" value="IPT"/>
</dbReference>
<dbReference type="InterPro" id="IPR027417">
    <property type="entry name" value="P-loop_NTPase"/>
</dbReference>
<dbReference type="NCBIfam" id="TIGR00174">
    <property type="entry name" value="miaA"/>
    <property type="match status" value="1"/>
</dbReference>
<dbReference type="PANTHER" id="PTHR11088">
    <property type="entry name" value="TRNA DIMETHYLALLYLTRANSFERASE"/>
    <property type="match status" value="1"/>
</dbReference>
<dbReference type="PANTHER" id="PTHR11088:SF60">
    <property type="entry name" value="TRNA DIMETHYLALLYLTRANSFERASE"/>
    <property type="match status" value="1"/>
</dbReference>
<dbReference type="Pfam" id="PF01715">
    <property type="entry name" value="IPPT"/>
    <property type="match status" value="1"/>
</dbReference>
<dbReference type="SUPFAM" id="SSF52540">
    <property type="entry name" value="P-loop containing nucleoside triphosphate hydrolases"/>
    <property type="match status" value="2"/>
</dbReference>
<organism>
    <name type="scientific">Acinetobacter baumannii (strain ACICU)</name>
    <dbReference type="NCBI Taxonomy" id="405416"/>
    <lineage>
        <taxon>Bacteria</taxon>
        <taxon>Pseudomonadati</taxon>
        <taxon>Pseudomonadota</taxon>
        <taxon>Gammaproteobacteria</taxon>
        <taxon>Moraxellales</taxon>
        <taxon>Moraxellaceae</taxon>
        <taxon>Acinetobacter</taxon>
        <taxon>Acinetobacter calcoaceticus/baumannii complex</taxon>
    </lineage>
</organism>